<gene>
    <name evidence="1" type="primary">hfq</name>
    <name type="ordered locus">Arad_2271</name>
</gene>
<feature type="chain" id="PRO_1000135015" description="RNA-binding protein Hfq">
    <location>
        <begin position="1"/>
        <end position="80"/>
    </location>
</feature>
<feature type="domain" description="Sm" evidence="2">
    <location>
        <begin position="10"/>
        <end position="70"/>
    </location>
</feature>
<name>HFQ_RHIR8</name>
<reference key="1">
    <citation type="journal article" date="2009" name="J. Bacteriol.">
        <title>Genome sequences of three Agrobacterium biovars help elucidate the evolution of multichromosome genomes in bacteria.</title>
        <authorList>
            <person name="Slater S.C."/>
            <person name="Goldman B.S."/>
            <person name="Goodner B."/>
            <person name="Setubal J.C."/>
            <person name="Farrand S.K."/>
            <person name="Nester E.W."/>
            <person name="Burr T.J."/>
            <person name="Banta L."/>
            <person name="Dickerman A.W."/>
            <person name="Paulsen I."/>
            <person name="Otten L."/>
            <person name="Suen G."/>
            <person name="Welch R."/>
            <person name="Almeida N.F."/>
            <person name="Arnold F."/>
            <person name="Burton O.T."/>
            <person name="Du Z."/>
            <person name="Ewing A."/>
            <person name="Godsy E."/>
            <person name="Heisel S."/>
            <person name="Houmiel K.L."/>
            <person name="Jhaveri J."/>
            <person name="Lu J."/>
            <person name="Miller N.M."/>
            <person name="Norton S."/>
            <person name="Chen Q."/>
            <person name="Phoolcharoen W."/>
            <person name="Ohlin V."/>
            <person name="Ondrusek D."/>
            <person name="Pride N."/>
            <person name="Stricklin S.L."/>
            <person name="Sun J."/>
            <person name="Wheeler C."/>
            <person name="Wilson L."/>
            <person name="Zhu H."/>
            <person name="Wood D.W."/>
        </authorList>
    </citation>
    <scope>NUCLEOTIDE SEQUENCE [LARGE SCALE GENOMIC DNA]</scope>
    <source>
        <strain>K84 / ATCC BAA-868</strain>
    </source>
</reference>
<sequence length="80" mass="9073">MAERSQNLQDLFLNTVRKQKISLTIFLINGVKLTGVVTSFDNFCVLLRRDGHSQLVYKHAISTIMPGQPMQMFESEEVAS</sequence>
<evidence type="ECO:0000255" key="1">
    <source>
        <dbReference type="HAMAP-Rule" id="MF_00436"/>
    </source>
</evidence>
<evidence type="ECO:0000255" key="2">
    <source>
        <dbReference type="PROSITE-ProRule" id="PRU01346"/>
    </source>
</evidence>
<dbReference type="EMBL" id="CP000628">
    <property type="protein sequence ID" value="ACM26499.1"/>
    <property type="molecule type" value="Genomic_DNA"/>
</dbReference>
<dbReference type="RefSeq" id="WP_007693481.1">
    <property type="nucleotide sequence ID" value="NC_011985.1"/>
</dbReference>
<dbReference type="SMR" id="B9JF08"/>
<dbReference type="STRING" id="311403.Arad_2271"/>
<dbReference type="GeneID" id="86848393"/>
<dbReference type="KEGG" id="ara:Arad_2271"/>
<dbReference type="eggNOG" id="COG1923">
    <property type="taxonomic scope" value="Bacteria"/>
</dbReference>
<dbReference type="HOGENOM" id="CLU_113688_0_0_5"/>
<dbReference type="Proteomes" id="UP000001600">
    <property type="component" value="Chromosome 1"/>
</dbReference>
<dbReference type="GO" id="GO:0005829">
    <property type="term" value="C:cytosol"/>
    <property type="evidence" value="ECO:0007669"/>
    <property type="project" value="TreeGrafter"/>
</dbReference>
<dbReference type="GO" id="GO:0003723">
    <property type="term" value="F:RNA binding"/>
    <property type="evidence" value="ECO:0007669"/>
    <property type="project" value="UniProtKB-UniRule"/>
</dbReference>
<dbReference type="GO" id="GO:0006355">
    <property type="term" value="P:regulation of DNA-templated transcription"/>
    <property type="evidence" value="ECO:0007669"/>
    <property type="project" value="InterPro"/>
</dbReference>
<dbReference type="GO" id="GO:0043487">
    <property type="term" value="P:regulation of RNA stability"/>
    <property type="evidence" value="ECO:0007669"/>
    <property type="project" value="TreeGrafter"/>
</dbReference>
<dbReference type="GO" id="GO:0045974">
    <property type="term" value="P:regulation of translation, ncRNA-mediated"/>
    <property type="evidence" value="ECO:0007669"/>
    <property type="project" value="TreeGrafter"/>
</dbReference>
<dbReference type="CDD" id="cd01716">
    <property type="entry name" value="Hfq"/>
    <property type="match status" value="1"/>
</dbReference>
<dbReference type="Gene3D" id="2.30.30.100">
    <property type="match status" value="1"/>
</dbReference>
<dbReference type="HAMAP" id="MF_00436">
    <property type="entry name" value="Hfq"/>
    <property type="match status" value="1"/>
</dbReference>
<dbReference type="InterPro" id="IPR005001">
    <property type="entry name" value="Hfq"/>
</dbReference>
<dbReference type="InterPro" id="IPR010920">
    <property type="entry name" value="LSM_dom_sf"/>
</dbReference>
<dbReference type="InterPro" id="IPR047575">
    <property type="entry name" value="Sm"/>
</dbReference>
<dbReference type="NCBIfam" id="TIGR02383">
    <property type="entry name" value="Hfq"/>
    <property type="match status" value="1"/>
</dbReference>
<dbReference type="NCBIfam" id="NF001602">
    <property type="entry name" value="PRK00395.1"/>
    <property type="match status" value="1"/>
</dbReference>
<dbReference type="PANTHER" id="PTHR34772">
    <property type="entry name" value="RNA-BINDING PROTEIN HFQ"/>
    <property type="match status" value="1"/>
</dbReference>
<dbReference type="PANTHER" id="PTHR34772:SF1">
    <property type="entry name" value="RNA-BINDING PROTEIN HFQ"/>
    <property type="match status" value="1"/>
</dbReference>
<dbReference type="Pfam" id="PF17209">
    <property type="entry name" value="Hfq"/>
    <property type="match status" value="1"/>
</dbReference>
<dbReference type="SUPFAM" id="SSF50182">
    <property type="entry name" value="Sm-like ribonucleoproteins"/>
    <property type="match status" value="1"/>
</dbReference>
<dbReference type="PROSITE" id="PS52002">
    <property type="entry name" value="SM"/>
    <property type="match status" value="1"/>
</dbReference>
<keyword id="KW-0694">RNA-binding</keyword>
<keyword id="KW-0346">Stress response</keyword>
<accession>B9JF08</accession>
<organism>
    <name type="scientific">Rhizobium rhizogenes (strain K84 / ATCC BAA-868)</name>
    <name type="common">Agrobacterium radiobacter</name>
    <dbReference type="NCBI Taxonomy" id="311403"/>
    <lineage>
        <taxon>Bacteria</taxon>
        <taxon>Pseudomonadati</taxon>
        <taxon>Pseudomonadota</taxon>
        <taxon>Alphaproteobacteria</taxon>
        <taxon>Hyphomicrobiales</taxon>
        <taxon>Rhizobiaceae</taxon>
        <taxon>Rhizobium/Agrobacterium group</taxon>
        <taxon>Rhizobium</taxon>
    </lineage>
</organism>
<proteinExistence type="inferred from homology"/>
<protein>
    <recommendedName>
        <fullName evidence="1">RNA-binding protein Hfq</fullName>
    </recommendedName>
</protein>
<comment type="function">
    <text evidence="1">RNA chaperone that binds small regulatory RNA (sRNAs) and mRNAs to facilitate mRNA translational regulation in response to envelope stress, environmental stress and changes in metabolite concentrations. Also binds with high specificity to tRNAs.</text>
</comment>
<comment type="subunit">
    <text evidence="1">Homohexamer.</text>
</comment>
<comment type="similarity">
    <text evidence="1">Belongs to the Hfq family.</text>
</comment>